<feature type="chain" id="PRO_1000053296" description="ATP synthase gamma chain">
    <location>
        <begin position="1"/>
        <end position="286"/>
    </location>
</feature>
<dbReference type="EMBL" id="CP000094">
    <property type="protein sequence ID" value="ABA77464.1"/>
    <property type="molecule type" value="Genomic_DNA"/>
</dbReference>
<dbReference type="RefSeq" id="WP_007954161.1">
    <property type="nucleotide sequence ID" value="NC_007492.2"/>
</dbReference>
<dbReference type="SMR" id="Q3K440"/>
<dbReference type="GeneID" id="93492026"/>
<dbReference type="KEGG" id="pfo:Pfl01_5731"/>
<dbReference type="eggNOG" id="COG0224">
    <property type="taxonomic scope" value="Bacteria"/>
</dbReference>
<dbReference type="HOGENOM" id="CLU_050669_0_1_6"/>
<dbReference type="Proteomes" id="UP000002704">
    <property type="component" value="Chromosome"/>
</dbReference>
<dbReference type="GO" id="GO:0005886">
    <property type="term" value="C:plasma membrane"/>
    <property type="evidence" value="ECO:0007669"/>
    <property type="project" value="UniProtKB-SubCell"/>
</dbReference>
<dbReference type="GO" id="GO:0045259">
    <property type="term" value="C:proton-transporting ATP synthase complex"/>
    <property type="evidence" value="ECO:0007669"/>
    <property type="project" value="UniProtKB-KW"/>
</dbReference>
<dbReference type="GO" id="GO:0005524">
    <property type="term" value="F:ATP binding"/>
    <property type="evidence" value="ECO:0007669"/>
    <property type="project" value="UniProtKB-UniRule"/>
</dbReference>
<dbReference type="GO" id="GO:0046933">
    <property type="term" value="F:proton-transporting ATP synthase activity, rotational mechanism"/>
    <property type="evidence" value="ECO:0007669"/>
    <property type="project" value="UniProtKB-UniRule"/>
</dbReference>
<dbReference type="GO" id="GO:0042777">
    <property type="term" value="P:proton motive force-driven plasma membrane ATP synthesis"/>
    <property type="evidence" value="ECO:0007669"/>
    <property type="project" value="UniProtKB-UniRule"/>
</dbReference>
<dbReference type="CDD" id="cd12151">
    <property type="entry name" value="F1-ATPase_gamma"/>
    <property type="match status" value="1"/>
</dbReference>
<dbReference type="FunFam" id="1.10.287.80:FF:000005">
    <property type="entry name" value="ATP synthase gamma chain"/>
    <property type="match status" value="1"/>
</dbReference>
<dbReference type="FunFam" id="3.40.1380.10:FF:000001">
    <property type="entry name" value="ATP synthase gamma chain"/>
    <property type="match status" value="1"/>
</dbReference>
<dbReference type="Gene3D" id="3.40.1380.10">
    <property type="match status" value="1"/>
</dbReference>
<dbReference type="Gene3D" id="1.10.287.80">
    <property type="entry name" value="ATP synthase, gamma subunit, helix hairpin domain"/>
    <property type="match status" value="1"/>
</dbReference>
<dbReference type="HAMAP" id="MF_00815">
    <property type="entry name" value="ATP_synth_gamma_bact"/>
    <property type="match status" value="1"/>
</dbReference>
<dbReference type="InterPro" id="IPR035968">
    <property type="entry name" value="ATP_synth_F1_ATPase_gsu"/>
</dbReference>
<dbReference type="InterPro" id="IPR000131">
    <property type="entry name" value="ATP_synth_F1_gsu"/>
</dbReference>
<dbReference type="InterPro" id="IPR023632">
    <property type="entry name" value="ATP_synth_F1_gsu_CS"/>
</dbReference>
<dbReference type="NCBIfam" id="TIGR01146">
    <property type="entry name" value="ATPsyn_F1gamma"/>
    <property type="match status" value="1"/>
</dbReference>
<dbReference type="NCBIfam" id="NF004144">
    <property type="entry name" value="PRK05621.1-1"/>
    <property type="match status" value="1"/>
</dbReference>
<dbReference type="PANTHER" id="PTHR11693">
    <property type="entry name" value="ATP SYNTHASE GAMMA CHAIN"/>
    <property type="match status" value="1"/>
</dbReference>
<dbReference type="PANTHER" id="PTHR11693:SF22">
    <property type="entry name" value="ATP SYNTHASE SUBUNIT GAMMA, MITOCHONDRIAL"/>
    <property type="match status" value="1"/>
</dbReference>
<dbReference type="Pfam" id="PF00231">
    <property type="entry name" value="ATP-synt"/>
    <property type="match status" value="1"/>
</dbReference>
<dbReference type="PRINTS" id="PR00126">
    <property type="entry name" value="ATPASEGAMMA"/>
</dbReference>
<dbReference type="SUPFAM" id="SSF52943">
    <property type="entry name" value="ATP synthase (F1-ATPase), gamma subunit"/>
    <property type="match status" value="1"/>
</dbReference>
<dbReference type="PROSITE" id="PS00153">
    <property type="entry name" value="ATPASE_GAMMA"/>
    <property type="match status" value="1"/>
</dbReference>
<gene>
    <name evidence="1" type="primary">atpG</name>
    <name type="ordered locus">Pfl01_5731</name>
</gene>
<comment type="function">
    <text evidence="1">Produces ATP from ADP in the presence of a proton gradient across the membrane. The gamma chain is believed to be important in regulating ATPase activity and the flow of protons through the CF(0) complex.</text>
</comment>
<comment type="subunit">
    <text evidence="1">F-type ATPases have 2 components, CF(1) - the catalytic core - and CF(0) - the membrane proton channel. CF(1) has five subunits: alpha(3), beta(3), gamma(1), delta(1), epsilon(1). CF(0) has three main subunits: a, b and c.</text>
</comment>
<comment type="subcellular location">
    <subcellularLocation>
        <location evidence="1">Cell inner membrane</location>
        <topology evidence="1">Peripheral membrane protein</topology>
    </subcellularLocation>
</comment>
<comment type="similarity">
    <text evidence="1">Belongs to the ATPase gamma chain family.</text>
</comment>
<sequence length="286" mass="31424">MAGAKEIRSKIASIKSTQKITSAMEKVAVSKMRKAQMRMAASRPYAERIRQVIGHLANANPEYRHPFMIDREVKRVGYVVVSSDRGLCGGLNTNLFKALVKDMAVNRENGVEIDLCVVGSKGAAFFRNFGGNVVAAISHLGEEPSINDLIGSVKVMLDAYLDGRIDRLSVVSNKFINTMTQQPTVEQLIPLVATPDQELKHHWDYLYEPDAKELLDGLMVRYVESQVYQAVVENNAAEQAARMIAMKNATDNAGDLISDLQLIYNKARQAAITQEISEIVGGAAAV</sequence>
<organism>
    <name type="scientific">Pseudomonas fluorescens (strain Pf0-1)</name>
    <dbReference type="NCBI Taxonomy" id="205922"/>
    <lineage>
        <taxon>Bacteria</taxon>
        <taxon>Pseudomonadati</taxon>
        <taxon>Pseudomonadota</taxon>
        <taxon>Gammaproteobacteria</taxon>
        <taxon>Pseudomonadales</taxon>
        <taxon>Pseudomonadaceae</taxon>
        <taxon>Pseudomonas</taxon>
    </lineage>
</organism>
<proteinExistence type="inferred from homology"/>
<accession>Q3K440</accession>
<name>ATPG_PSEPF</name>
<protein>
    <recommendedName>
        <fullName evidence="1">ATP synthase gamma chain</fullName>
    </recommendedName>
    <alternativeName>
        <fullName evidence="1">ATP synthase F1 sector gamma subunit</fullName>
    </alternativeName>
    <alternativeName>
        <fullName evidence="1">F-ATPase gamma subunit</fullName>
    </alternativeName>
</protein>
<reference key="1">
    <citation type="journal article" date="2009" name="Genome Biol.">
        <title>Genomic and genetic analyses of diversity and plant interactions of Pseudomonas fluorescens.</title>
        <authorList>
            <person name="Silby M.W."/>
            <person name="Cerdeno-Tarraga A.M."/>
            <person name="Vernikos G.S."/>
            <person name="Giddens S.R."/>
            <person name="Jackson R.W."/>
            <person name="Preston G.M."/>
            <person name="Zhang X.-X."/>
            <person name="Moon C.D."/>
            <person name="Gehrig S.M."/>
            <person name="Godfrey S.A.C."/>
            <person name="Knight C.G."/>
            <person name="Malone J.G."/>
            <person name="Robinson Z."/>
            <person name="Spiers A.J."/>
            <person name="Harris S."/>
            <person name="Challis G.L."/>
            <person name="Yaxley A.M."/>
            <person name="Harris D."/>
            <person name="Seeger K."/>
            <person name="Murphy L."/>
            <person name="Rutter S."/>
            <person name="Squares R."/>
            <person name="Quail M.A."/>
            <person name="Saunders E."/>
            <person name="Mavromatis K."/>
            <person name="Brettin T.S."/>
            <person name="Bentley S.D."/>
            <person name="Hothersall J."/>
            <person name="Stephens E."/>
            <person name="Thomas C.M."/>
            <person name="Parkhill J."/>
            <person name="Levy S.B."/>
            <person name="Rainey P.B."/>
            <person name="Thomson N.R."/>
        </authorList>
    </citation>
    <scope>NUCLEOTIDE SEQUENCE [LARGE SCALE GENOMIC DNA]</scope>
    <source>
        <strain>Pf0-1</strain>
    </source>
</reference>
<evidence type="ECO:0000255" key="1">
    <source>
        <dbReference type="HAMAP-Rule" id="MF_00815"/>
    </source>
</evidence>
<keyword id="KW-0066">ATP synthesis</keyword>
<keyword id="KW-0997">Cell inner membrane</keyword>
<keyword id="KW-1003">Cell membrane</keyword>
<keyword id="KW-0139">CF(1)</keyword>
<keyword id="KW-0375">Hydrogen ion transport</keyword>
<keyword id="KW-0406">Ion transport</keyword>
<keyword id="KW-0472">Membrane</keyword>
<keyword id="KW-0813">Transport</keyword>